<name>YFKA_BACSU</name>
<organism>
    <name type="scientific">Bacillus subtilis (strain 168)</name>
    <dbReference type="NCBI Taxonomy" id="224308"/>
    <lineage>
        <taxon>Bacteria</taxon>
        <taxon>Bacillati</taxon>
        <taxon>Bacillota</taxon>
        <taxon>Bacilli</taxon>
        <taxon>Bacillales</taxon>
        <taxon>Bacillaceae</taxon>
        <taxon>Bacillus</taxon>
    </lineage>
</organism>
<protein>
    <recommendedName>
        <fullName>Putative protein YfkA</fullName>
    </recommendedName>
</protein>
<sequence>MTQNTKLRPITPEFDPWEAYMDVDQYGDMQLTNVEFTTTTLCNMRCEHCAVGYTLQPKDPNALPIDLLLKRLEEIPRLRSISITGGEPMLSLKSVKEYVVPLLKYAHERGVRTQINSNLTLDIERYEWIIPYLDVLHISHNWGTVEDFAEIGFAMMDRKPTFEQRARYFEKMIENSRTLVDAGVMVSAETMLNKRTLPHIEHIHRQITEDMKCQRHEVHPMYPSDFASALESLSLKEMRQAIHRLLDIRDENTWMLFGTLPFYACSPDEDDQKLLRRLRAAKNVTVRNDPDGRSRLNVNIFDGNIIVTDFGDTPPLGNIQTDSLPSAYEKWRETKLAKELSCHCPNVRCLGPNVLVKNSYYQDTDFTKRQARS</sequence>
<reference key="1">
    <citation type="journal article" date="1996" name="Microbiology">
        <title>Cloning and sequencing of a 40.6 kb segment in the 73 degrees-76 degrees region of the Bacillus subtilis chromosome containing genes for trehalose metabolism and acetoin utilization.</title>
        <authorList>
            <person name="Yamamoto H."/>
            <person name="Uchiyama S."/>
            <person name="Sekiguchi J."/>
        </authorList>
    </citation>
    <scope>NUCLEOTIDE SEQUENCE [GENOMIC DNA]</scope>
    <source>
        <strain>168 / AC327</strain>
    </source>
</reference>
<reference key="2">
    <citation type="journal article" date="1997" name="Nature">
        <title>The complete genome sequence of the Gram-positive bacterium Bacillus subtilis.</title>
        <authorList>
            <person name="Kunst F."/>
            <person name="Ogasawara N."/>
            <person name="Moszer I."/>
            <person name="Albertini A.M."/>
            <person name="Alloni G."/>
            <person name="Azevedo V."/>
            <person name="Bertero M.G."/>
            <person name="Bessieres P."/>
            <person name="Bolotin A."/>
            <person name="Borchert S."/>
            <person name="Borriss R."/>
            <person name="Boursier L."/>
            <person name="Brans A."/>
            <person name="Braun M."/>
            <person name="Brignell S.C."/>
            <person name="Bron S."/>
            <person name="Brouillet S."/>
            <person name="Bruschi C.V."/>
            <person name="Caldwell B."/>
            <person name="Capuano V."/>
            <person name="Carter N.M."/>
            <person name="Choi S.-K."/>
            <person name="Codani J.-J."/>
            <person name="Connerton I.F."/>
            <person name="Cummings N.J."/>
            <person name="Daniel R.A."/>
            <person name="Denizot F."/>
            <person name="Devine K.M."/>
            <person name="Duesterhoeft A."/>
            <person name="Ehrlich S.D."/>
            <person name="Emmerson P.T."/>
            <person name="Entian K.-D."/>
            <person name="Errington J."/>
            <person name="Fabret C."/>
            <person name="Ferrari E."/>
            <person name="Foulger D."/>
            <person name="Fritz C."/>
            <person name="Fujita M."/>
            <person name="Fujita Y."/>
            <person name="Fuma S."/>
            <person name="Galizzi A."/>
            <person name="Galleron N."/>
            <person name="Ghim S.-Y."/>
            <person name="Glaser P."/>
            <person name="Goffeau A."/>
            <person name="Golightly E.J."/>
            <person name="Grandi G."/>
            <person name="Guiseppi G."/>
            <person name="Guy B.J."/>
            <person name="Haga K."/>
            <person name="Haiech J."/>
            <person name="Harwood C.R."/>
            <person name="Henaut A."/>
            <person name="Hilbert H."/>
            <person name="Holsappel S."/>
            <person name="Hosono S."/>
            <person name="Hullo M.-F."/>
            <person name="Itaya M."/>
            <person name="Jones L.-M."/>
            <person name="Joris B."/>
            <person name="Karamata D."/>
            <person name="Kasahara Y."/>
            <person name="Klaerr-Blanchard M."/>
            <person name="Klein C."/>
            <person name="Kobayashi Y."/>
            <person name="Koetter P."/>
            <person name="Koningstein G."/>
            <person name="Krogh S."/>
            <person name="Kumano M."/>
            <person name="Kurita K."/>
            <person name="Lapidus A."/>
            <person name="Lardinois S."/>
            <person name="Lauber J."/>
            <person name="Lazarevic V."/>
            <person name="Lee S.-M."/>
            <person name="Levine A."/>
            <person name="Liu H."/>
            <person name="Masuda S."/>
            <person name="Mauel C."/>
            <person name="Medigue C."/>
            <person name="Medina N."/>
            <person name="Mellado R.P."/>
            <person name="Mizuno M."/>
            <person name="Moestl D."/>
            <person name="Nakai S."/>
            <person name="Noback M."/>
            <person name="Noone D."/>
            <person name="O'Reilly M."/>
            <person name="Ogawa K."/>
            <person name="Ogiwara A."/>
            <person name="Oudega B."/>
            <person name="Park S.-H."/>
            <person name="Parro V."/>
            <person name="Pohl T.M."/>
            <person name="Portetelle D."/>
            <person name="Porwollik S."/>
            <person name="Prescott A.M."/>
            <person name="Presecan E."/>
            <person name="Pujic P."/>
            <person name="Purnelle B."/>
            <person name="Rapoport G."/>
            <person name="Rey M."/>
            <person name="Reynolds S."/>
            <person name="Rieger M."/>
            <person name="Rivolta C."/>
            <person name="Rocha E."/>
            <person name="Roche B."/>
            <person name="Rose M."/>
            <person name="Sadaie Y."/>
            <person name="Sato T."/>
            <person name="Scanlan E."/>
            <person name="Schleich S."/>
            <person name="Schroeter R."/>
            <person name="Scoffone F."/>
            <person name="Sekiguchi J."/>
            <person name="Sekowska A."/>
            <person name="Seror S.J."/>
            <person name="Serror P."/>
            <person name="Shin B.-S."/>
            <person name="Soldo B."/>
            <person name="Sorokin A."/>
            <person name="Tacconi E."/>
            <person name="Takagi T."/>
            <person name="Takahashi H."/>
            <person name="Takemaru K."/>
            <person name="Takeuchi M."/>
            <person name="Tamakoshi A."/>
            <person name="Tanaka T."/>
            <person name="Terpstra P."/>
            <person name="Tognoni A."/>
            <person name="Tosato V."/>
            <person name="Uchiyama S."/>
            <person name="Vandenbol M."/>
            <person name="Vannier F."/>
            <person name="Vassarotti A."/>
            <person name="Viari A."/>
            <person name="Wambutt R."/>
            <person name="Wedler E."/>
            <person name="Wedler H."/>
            <person name="Weitzenegger T."/>
            <person name="Winters P."/>
            <person name="Wipat A."/>
            <person name="Yamamoto H."/>
            <person name="Yamane K."/>
            <person name="Yasumoto K."/>
            <person name="Yata K."/>
            <person name="Yoshida K."/>
            <person name="Yoshikawa H.-F."/>
            <person name="Zumstein E."/>
            <person name="Yoshikawa H."/>
            <person name="Danchin A."/>
        </authorList>
    </citation>
    <scope>NUCLEOTIDE SEQUENCE [LARGE SCALE GENOMIC DNA]</scope>
    <source>
        <strain>168</strain>
    </source>
</reference>
<reference key="3">
    <citation type="journal article" date="2009" name="Microbiology">
        <title>From a consortium sequence to a unified sequence: the Bacillus subtilis 168 reference genome a decade later.</title>
        <authorList>
            <person name="Barbe V."/>
            <person name="Cruveiller S."/>
            <person name="Kunst F."/>
            <person name="Lenoble P."/>
            <person name="Meurice G."/>
            <person name="Sekowska A."/>
            <person name="Vallenet D."/>
            <person name="Wang T."/>
            <person name="Moszer I."/>
            <person name="Medigue C."/>
            <person name="Danchin A."/>
        </authorList>
    </citation>
    <scope>SEQUENCE REVISION</scope>
</reference>
<evidence type="ECO:0000255" key="1"/>
<evidence type="ECO:0000255" key="2">
    <source>
        <dbReference type="PROSITE-ProRule" id="PRU01266"/>
    </source>
</evidence>
<evidence type="ECO:0000305" key="3"/>
<evidence type="ECO:0000305" key="4">
    <source>
    </source>
</evidence>
<evidence type="ECO:0000305" key="5">
    <source>
    </source>
</evidence>
<gene>
    <name type="primary">yfkA</name>
    <name type="synonym">ykfB</name>
    <name type="ordered locus">BSU07955</name>
    <name type="ORF">BSU07950</name>
    <name type="ORF">BSU07960</name>
</gene>
<keyword id="KW-0004">4Fe-4S</keyword>
<keyword id="KW-0408">Iron</keyword>
<keyword id="KW-0411">Iron-sulfur</keyword>
<keyword id="KW-0479">Metal-binding</keyword>
<keyword id="KW-1185">Reference proteome</keyword>
<keyword id="KW-0949">S-adenosyl-L-methionine</keyword>
<proteinExistence type="inferred from homology"/>
<feature type="chain" id="PRO_0000386529" description="Putative protein YfkA">
    <location>
        <begin position="1"/>
        <end position="373"/>
    </location>
</feature>
<feature type="domain" description="Radical SAM core" evidence="2">
    <location>
        <begin position="26"/>
        <end position="256"/>
    </location>
</feature>
<feature type="binding site" evidence="1">
    <location>
        <position position="42"/>
    </location>
    <ligand>
        <name>[4Fe-4S] cluster</name>
        <dbReference type="ChEBI" id="CHEBI:49883"/>
        <note>4Fe-4S-S-AdoMet</note>
    </ligand>
</feature>
<feature type="binding site" evidence="1">
    <location>
        <position position="46"/>
    </location>
    <ligand>
        <name>[4Fe-4S] cluster</name>
        <dbReference type="ChEBI" id="CHEBI:49883"/>
        <note>4Fe-4S-S-AdoMet</note>
    </ligand>
</feature>
<feature type="binding site" evidence="1">
    <location>
        <position position="49"/>
    </location>
    <ligand>
        <name>[4Fe-4S] cluster</name>
        <dbReference type="ChEBI" id="CHEBI:49883"/>
        <note>4Fe-4S-S-AdoMet</note>
    </ligand>
</feature>
<comment type="cofactor">
    <cofactor evidence="3">
        <name>[4Fe-4S] cluster</name>
        <dbReference type="ChEBI" id="CHEBI:49883"/>
    </cofactor>
    <text evidence="3">Binds 1 [4Fe-4S] cluster. The cluster is coordinated with 3 cysteines and an exchangeable S-adenosyl-L-methionine.</text>
</comment>
<comment type="similarity">
    <text evidence="3">Belongs to the radical SAM superfamily.</text>
</comment>
<comment type="caution">
    <text evidence="4 5">Was originally (PubMed:8969503, PubMed:9384377) predicted to be the product of two different genes yfkA and yfkB.</text>
</comment>
<comment type="sequence caution" evidence="3">
    <conflict type="frameshift">
        <sequence resource="EMBL-CDS" id="BAA23391"/>
    </conflict>
</comment>
<comment type="sequence caution" evidence="3">
    <conflict type="erroneous initiation">
        <sequence resource="EMBL-CDS" id="BAA23392"/>
    </conflict>
    <text>Truncated N-terminus.</text>
</comment>
<comment type="sequence caution" evidence="3">
    <conflict type="frameshift">
        <sequence resource="EMBL-CDS" id="BAA23392"/>
    </conflict>
</comment>
<dbReference type="EMBL" id="D83967">
    <property type="protein sequence ID" value="BAA23391.1"/>
    <property type="status" value="ALT_FRAME"/>
    <property type="molecule type" value="Genomic_DNA"/>
</dbReference>
<dbReference type="EMBL" id="D83967">
    <property type="protein sequence ID" value="BAA23392.1"/>
    <property type="status" value="ALT_SEQ"/>
    <property type="molecule type" value="Genomic_DNA"/>
</dbReference>
<dbReference type="EMBL" id="AL009126">
    <property type="protein sequence ID" value="CAB12625.2"/>
    <property type="molecule type" value="Genomic_DNA"/>
</dbReference>
<dbReference type="PIR" id="F69807">
    <property type="entry name" value="F69807"/>
</dbReference>
<dbReference type="RefSeq" id="NP_388677.2">
    <property type="nucleotide sequence ID" value="NC_000964.3"/>
</dbReference>
<dbReference type="FunCoup" id="O34400">
    <property type="interactions" value="149"/>
</dbReference>
<dbReference type="STRING" id="224308.BSU07955"/>
<dbReference type="jPOST" id="O34400"/>
<dbReference type="PaxDb" id="224308-BSU07955"/>
<dbReference type="EnsemblBacteria" id="CAB12625">
    <property type="protein sequence ID" value="CAB12625"/>
    <property type="gene ID" value="BSU_07955"/>
</dbReference>
<dbReference type="GeneID" id="938812"/>
<dbReference type="KEGG" id="bsu:BSU07955"/>
<dbReference type="PATRIC" id="fig|224308.179.peg.861"/>
<dbReference type="eggNOG" id="COG0535">
    <property type="taxonomic scope" value="Bacteria"/>
</dbReference>
<dbReference type="InParanoid" id="O34400"/>
<dbReference type="OrthoDB" id="2395634at2"/>
<dbReference type="PhylomeDB" id="O34400"/>
<dbReference type="BioCyc" id="BSUB:BSU07955-MONOMER"/>
<dbReference type="BRENDA" id="5.1.1.20">
    <property type="organism ID" value="658"/>
</dbReference>
<dbReference type="Proteomes" id="UP000001570">
    <property type="component" value="Chromosome"/>
</dbReference>
<dbReference type="GO" id="GO:0051539">
    <property type="term" value="F:4 iron, 4 sulfur cluster binding"/>
    <property type="evidence" value="ECO:0007669"/>
    <property type="project" value="UniProtKB-KW"/>
</dbReference>
<dbReference type="GO" id="GO:0003824">
    <property type="term" value="F:catalytic activity"/>
    <property type="evidence" value="ECO:0007669"/>
    <property type="project" value="InterPro"/>
</dbReference>
<dbReference type="GO" id="GO:0046872">
    <property type="term" value="F:metal ion binding"/>
    <property type="evidence" value="ECO:0007669"/>
    <property type="project" value="UniProtKB-KW"/>
</dbReference>
<dbReference type="CDD" id="cd01335">
    <property type="entry name" value="Radical_SAM"/>
    <property type="match status" value="1"/>
</dbReference>
<dbReference type="Gene3D" id="3.20.20.70">
    <property type="entry name" value="Aldolase class I"/>
    <property type="match status" value="1"/>
</dbReference>
<dbReference type="InterPro" id="IPR013785">
    <property type="entry name" value="Aldolase_TIM"/>
</dbReference>
<dbReference type="InterPro" id="IPR007197">
    <property type="entry name" value="rSAM"/>
</dbReference>
<dbReference type="InterPro" id="IPR031004">
    <property type="entry name" value="rSAM_YfkAB"/>
</dbReference>
<dbReference type="InterPro" id="IPR014866">
    <property type="entry name" value="YfkB"/>
</dbReference>
<dbReference type="NCBIfam" id="TIGR04478">
    <property type="entry name" value="rSAM_YfkAB"/>
    <property type="match status" value="1"/>
</dbReference>
<dbReference type="PANTHER" id="PTHR42836">
    <property type="entry name" value="7-CARBOXY-7-DEAZAGUANINE SYNTHASE"/>
    <property type="match status" value="1"/>
</dbReference>
<dbReference type="PANTHER" id="PTHR42836:SF2">
    <property type="entry name" value="PROTEIN YFKA-RELATED"/>
    <property type="match status" value="1"/>
</dbReference>
<dbReference type="Pfam" id="PF04055">
    <property type="entry name" value="Radical_SAM"/>
    <property type="match status" value="1"/>
</dbReference>
<dbReference type="Pfam" id="PF08756">
    <property type="entry name" value="YfkB"/>
    <property type="match status" value="1"/>
</dbReference>
<dbReference type="SFLD" id="SFLDS00029">
    <property type="entry name" value="Radical_SAM"/>
    <property type="match status" value="1"/>
</dbReference>
<dbReference type="SFLD" id="SFLDG01067">
    <property type="entry name" value="SPASM/twitch_domain_containing"/>
    <property type="match status" value="1"/>
</dbReference>
<dbReference type="SFLD" id="SFLDG01097">
    <property type="entry name" value="Uncharacterised_Radical_SAM_Su"/>
    <property type="match status" value="1"/>
</dbReference>
<dbReference type="SUPFAM" id="SSF102114">
    <property type="entry name" value="Radical SAM enzymes"/>
    <property type="match status" value="1"/>
</dbReference>
<dbReference type="PROSITE" id="PS51918">
    <property type="entry name" value="RADICAL_SAM"/>
    <property type="match status" value="1"/>
</dbReference>
<accession>O34400</accession>
<accession>C0SP88</accession>
<accession>O34868</accession>
<accession>Q79EY5</accession>
<accession>Q79EY6</accession>